<keyword id="KW-1003">Cell membrane</keyword>
<keyword id="KW-0472">Membrane</keyword>
<keyword id="KW-0520">NAD</keyword>
<keyword id="KW-0874">Quinone</keyword>
<keyword id="KW-1185">Reference proteome</keyword>
<keyword id="KW-1278">Translocase</keyword>
<keyword id="KW-0812">Transmembrane</keyword>
<keyword id="KW-1133">Transmembrane helix</keyword>
<keyword id="KW-0813">Transport</keyword>
<keyword id="KW-0830">Ubiquinone</keyword>
<evidence type="ECO:0000255" key="1">
    <source>
        <dbReference type="HAMAP-Rule" id="MF_00445"/>
    </source>
</evidence>
<organism>
    <name type="scientific">Roseiflexus castenholzii (strain DSM 13941 / HLO8)</name>
    <dbReference type="NCBI Taxonomy" id="383372"/>
    <lineage>
        <taxon>Bacteria</taxon>
        <taxon>Bacillati</taxon>
        <taxon>Chloroflexota</taxon>
        <taxon>Chloroflexia</taxon>
        <taxon>Chloroflexales</taxon>
        <taxon>Roseiflexineae</taxon>
        <taxon>Roseiflexaceae</taxon>
        <taxon>Roseiflexus</taxon>
    </lineage>
</organism>
<dbReference type="EC" id="7.1.1.-" evidence="1"/>
<dbReference type="EMBL" id="CP000804">
    <property type="protein sequence ID" value="ABU58185.1"/>
    <property type="molecule type" value="Genomic_DNA"/>
</dbReference>
<dbReference type="RefSeq" id="WP_012120609.1">
    <property type="nucleotide sequence ID" value="NC_009767.1"/>
</dbReference>
<dbReference type="SMR" id="A7NL15"/>
<dbReference type="STRING" id="383372.Rcas_2099"/>
<dbReference type="KEGG" id="rca:Rcas_2099"/>
<dbReference type="eggNOG" id="COG1007">
    <property type="taxonomic scope" value="Bacteria"/>
</dbReference>
<dbReference type="HOGENOM" id="CLU_007100_1_3_0"/>
<dbReference type="OrthoDB" id="9807568at2"/>
<dbReference type="Proteomes" id="UP000000263">
    <property type="component" value="Chromosome"/>
</dbReference>
<dbReference type="GO" id="GO:0005886">
    <property type="term" value="C:plasma membrane"/>
    <property type="evidence" value="ECO:0007669"/>
    <property type="project" value="UniProtKB-SubCell"/>
</dbReference>
<dbReference type="GO" id="GO:0008137">
    <property type="term" value="F:NADH dehydrogenase (ubiquinone) activity"/>
    <property type="evidence" value="ECO:0007669"/>
    <property type="project" value="InterPro"/>
</dbReference>
<dbReference type="GO" id="GO:0050136">
    <property type="term" value="F:NADH:ubiquinone reductase (non-electrogenic) activity"/>
    <property type="evidence" value="ECO:0007669"/>
    <property type="project" value="UniProtKB-UniRule"/>
</dbReference>
<dbReference type="GO" id="GO:0048038">
    <property type="term" value="F:quinone binding"/>
    <property type="evidence" value="ECO:0007669"/>
    <property type="project" value="UniProtKB-KW"/>
</dbReference>
<dbReference type="GO" id="GO:0042773">
    <property type="term" value="P:ATP synthesis coupled electron transport"/>
    <property type="evidence" value="ECO:0007669"/>
    <property type="project" value="InterPro"/>
</dbReference>
<dbReference type="HAMAP" id="MF_00445">
    <property type="entry name" value="NDH1_NuoN_1"/>
    <property type="match status" value="1"/>
</dbReference>
<dbReference type="InterPro" id="IPR010096">
    <property type="entry name" value="NADH-Q_OxRdtase_suN/2"/>
</dbReference>
<dbReference type="InterPro" id="IPR001750">
    <property type="entry name" value="ND/Mrp_TM"/>
</dbReference>
<dbReference type="NCBIfam" id="TIGR01770">
    <property type="entry name" value="NDH_I_N"/>
    <property type="match status" value="1"/>
</dbReference>
<dbReference type="PANTHER" id="PTHR22773">
    <property type="entry name" value="NADH DEHYDROGENASE"/>
    <property type="match status" value="1"/>
</dbReference>
<dbReference type="Pfam" id="PF00361">
    <property type="entry name" value="Proton_antipo_M"/>
    <property type="match status" value="1"/>
</dbReference>
<gene>
    <name evidence="1" type="primary">nuoN1</name>
    <name type="ordered locus">Rcas_2099</name>
</gene>
<name>NUON1_ROSCS</name>
<sequence length="540" mass="57205">MSFQITDIPRILPELMLLLLGLLVLGSDVLTRWGRGPAAQLERAREAGQLTAVGLGLVFIVGLVQSRFLFTVPDPAGGPLDVLLTLGRNLQTGGPGGSPILGAFATDEFTMIARLTFIGAAFLTTLLAMGYRLTANPGEFYALLIFSTLGMSIMAAATEFILAYLALELSSLSLYVLAGYFRESERSPEAGLKYFLFGSLSSAIFLYGISLTYGFVASENQKAGGAPIIATLFSEVGRFATGDAAGSPLLILGMLFIIAGLGYKISVVPFHTWAPDVYQGAPPPVTAFLSTASKAAGFLLLYRLLTTAFPGAVGAPRLEEFNGWTSILAILALVTVIVGNLAALPQTNARRLLAYSSIGHAGFLLLAVLLWASASPVDRTFGTAALIYYLIVYSLTNLGSFGVLAVLTNALGSDDLSAMQGLWRRNMSLTLMMTILILSLAGIPPLAGFWAKFFVFMAGYQAGAVPLVTIAVIMTVVSLYYYLRFLKAMWILPAPAITPFKTPPVANAAIILSTVLVVLLGLLPNLIWGTISSAASVAAR</sequence>
<reference key="1">
    <citation type="submission" date="2007-08" db="EMBL/GenBank/DDBJ databases">
        <title>Complete sequence of Roseiflexus castenholzii DSM 13941.</title>
        <authorList>
            <consortium name="US DOE Joint Genome Institute"/>
            <person name="Copeland A."/>
            <person name="Lucas S."/>
            <person name="Lapidus A."/>
            <person name="Barry K."/>
            <person name="Glavina del Rio T."/>
            <person name="Dalin E."/>
            <person name="Tice H."/>
            <person name="Pitluck S."/>
            <person name="Thompson L.S."/>
            <person name="Brettin T."/>
            <person name="Bruce D."/>
            <person name="Detter J.C."/>
            <person name="Han C."/>
            <person name="Tapia R."/>
            <person name="Schmutz J."/>
            <person name="Larimer F."/>
            <person name="Land M."/>
            <person name="Hauser L."/>
            <person name="Kyrpides N."/>
            <person name="Mikhailova N."/>
            <person name="Bryant D.A."/>
            <person name="Hanada S."/>
            <person name="Tsukatani Y."/>
            <person name="Richardson P."/>
        </authorList>
    </citation>
    <scope>NUCLEOTIDE SEQUENCE [LARGE SCALE GENOMIC DNA]</scope>
    <source>
        <strain>DSM 13941 / HLO8</strain>
    </source>
</reference>
<comment type="function">
    <text evidence="1">NDH-1 shuttles electrons from NADH, via FMN and iron-sulfur (Fe-S) centers, to quinones in the respiratory chain. The immediate electron acceptor for the enzyme in this species is believed to be ubiquinone. Couples the redox reaction to proton translocation (for every two electrons transferred, four hydrogen ions are translocated across the cytoplasmic membrane), and thus conserves the redox energy in a proton gradient.</text>
</comment>
<comment type="catalytic activity">
    <reaction evidence="1">
        <text>a quinone + NADH + 5 H(+)(in) = a quinol + NAD(+) + 4 H(+)(out)</text>
        <dbReference type="Rhea" id="RHEA:57888"/>
        <dbReference type="ChEBI" id="CHEBI:15378"/>
        <dbReference type="ChEBI" id="CHEBI:24646"/>
        <dbReference type="ChEBI" id="CHEBI:57540"/>
        <dbReference type="ChEBI" id="CHEBI:57945"/>
        <dbReference type="ChEBI" id="CHEBI:132124"/>
    </reaction>
</comment>
<comment type="subunit">
    <text evidence="1">NDH-1 is composed of 14 different subunits. Subunits NuoA, H, J, K, L, M, N constitute the membrane sector of the complex.</text>
</comment>
<comment type="subcellular location">
    <subcellularLocation>
        <location evidence="1">Cell membrane</location>
        <topology evidence="1">Multi-pass membrane protein</topology>
    </subcellularLocation>
</comment>
<comment type="similarity">
    <text evidence="1">Belongs to the complex I subunit 2 family.</text>
</comment>
<feature type="chain" id="PRO_0000391215" description="NADH-quinone oxidoreductase subunit N 1">
    <location>
        <begin position="1"/>
        <end position="540"/>
    </location>
</feature>
<feature type="transmembrane region" description="Helical" evidence="1">
    <location>
        <begin position="11"/>
        <end position="31"/>
    </location>
</feature>
<feature type="transmembrane region" description="Helical" evidence="1">
    <location>
        <begin position="52"/>
        <end position="72"/>
    </location>
</feature>
<feature type="transmembrane region" description="Helical" evidence="1">
    <location>
        <begin position="109"/>
        <end position="129"/>
    </location>
</feature>
<feature type="transmembrane region" description="Helical" evidence="1">
    <location>
        <begin position="142"/>
        <end position="162"/>
    </location>
</feature>
<feature type="transmembrane region" description="Helical" evidence="1">
    <location>
        <begin position="195"/>
        <end position="215"/>
    </location>
</feature>
<feature type="transmembrane region" description="Helical" evidence="1">
    <location>
        <begin position="250"/>
        <end position="270"/>
    </location>
</feature>
<feature type="transmembrane region" description="Helical" evidence="1">
    <location>
        <begin position="284"/>
        <end position="306"/>
    </location>
</feature>
<feature type="transmembrane region" description="Helical" evidence="1">
    <location>
        <begin position="324"/>
        <end position="344"/>
    </location>
</feature>
<feature type="transmembrane region" description="Helical" evidence="1">
    <location>
        <begin position="352"/>
        <end position="372"/>
    </location>
</feature>
<feature type="transmembrane region" description="Helical" evidence="1">
    <location>
        <begin position="386"/>
        <end position="406"/>
    </location>
</feature>
<feature type="transmembrane region" description="Helical" evidence="1">
    <location>
        <begin position="431"/>
        <end position="451"/>
    </location>
</feature>
<feature type="transmembrane region" description="Helical" evidence="1">
    <location>
        <begin position="464"/>
        <end position="486"/>
    </location>
</feature>
<feature type="transmembrane region" description="Helical" evidence="1">
    <location>
        <begin position="508"/>
        <end position="528"/>
    </location>
</feature>
<accession>A7NL15</accession>
<protein>
    <recommendedName>
        <fullName evidence="1">NADH-quinone oxidoreductase subunit N 1</fullName>
        <ecNumber evidence="1">7.1.1.-</ecNumber>
    </recommendedName>
    <alternativeName>
        <fullName evidence="1">NADH dehydrogenase I subunit N 1</fullName>
    </alternativeName>
    <alternativeName>
        <fullName evidence="1">NDH-1 subunit N 1</fullName>
    </alternativeName>
</protein>
<proteinExistence type="inferred from homology"/>